<comment type="function">
    <text evidence="1">Small GTPase required for proper localization of RNA polymerase II and III (RNAPII and RNAPIII). May act at an RNAP assembly step prior to nuclear import.</text>
</comment>
<comment type="subunit">
    <text evidence="1 2">Heterodimers with GPN1 or GPN3. Binds to RNA polymerase II (RNAPII).</text>
</comment>
<comment type="similarity">
    <text evidence="4">Belongs to the GPN-loop GTPase family.</text>
</comment>
<accession>Q8VEJ1</accession>
<accession>A2A9E9</accession>
<gene>
    <name evidence="2" type="primary">Gpn2</name>
    <name evidence="2" type="synonym">Atpbd1b</name>
</gene>
<reference key="1">
    <citation type="journal article" date="2009" name="PLoS Biol.">
        <title>Lineage-specific biology revealed by a finished genome assembly of the mouse.</title>
        <authorList>
            <person name="Church D.M."/>
            <person name="Goodstadt L."/>
            <person name="Hillier L.W."/>
            <person name="Zody M.C."/>
            <person name="Goldstein S."/>
            <person name="She X."/>
            <person name="Bult C.J."/>
            <person name="Agarwala R."/>
            <person name="Cherry J.L."/>
            <person name="DiCuccio M."/>
            <person name="Hlavina W."/>
            <person name="Kapustin Y."/>
            <person name="Meric P."/>
            <person name="Maglott D."/>
            <person name="Birtle Z."/>
            <person name="Marques A.C."/>
            <person name="Graves T."/>
            <person name="Zhou S."/>
            <person name="Teague B."/>
            <person name="Potamousis K."/>
            <person name="Churas C."/>
            <person name="Place M."/>
            <person name="Herschleb J."/>
            <person name="Runnheim R."/>
            <person name="Forrest D."/>
            <person name="Amos-Landgraf J."/>
            <person name="Schwartz D.C."/>
            <person name="Cheng Z."/>
            <person name="Lindblad-Toh K."/>
            <person name="Eichler E.E."/>
            <person name="Ponting C.P."/>
        </authorList>
    </citation>
    <scope>NUCLEOTIDE SEQUENCE [LARGE SCALE GENOMIC DNA]</scope>
    <source>
        <strain>C57BL/6J</strain>
    </source>
</reference>
<reference key="2">
    <citation type="journal article" date="2004" name="Genome Res.">
        <title>The status, quality, and expansion of the NIH full-length cDNA project: the Mammalian Gene Collection (MGC).</title>
        <authorList>
            <consortium name="The MGC Project Team"/>
        </authorList>
    </citation>
    <scope>NUCLEOTIDE SEQUENCE [LARGE SCALE MRNA]</scope>
    <source>
        <strain>Czech II</strain>
        <tissue>Mammary tumor</tissue>
    </source>
</reference>
<proteinExistence type="evidence at transcript level"/>
<keyword id="KW-0007">Acetylation</keyword>
<keyword id="KW-0342">GTP-binding</keyword>
<keyword id="KW-0378">Hydrolase</keyword>
<keyword id="KW-0547">Nucleotide-binding</keyword>
<keyword id="KW-1185">Reference proteome</keyword>
<protein>
    <recommendedName>
        <fullName evidence="2">GPN-loop GTPase 2</fullName>
    </recommendedName>
    <alternativeName>
        <fullName evidence="2">ATP-binding domain 1 family member B</fullName>
    </alternativeName>
</protein>
<dbReference type="EMBL" id="AL627228">
    <property type="status" value="NOT_ANNOTATED_CDS"/>
    <property type="molecule type" value="Genomic_DNA"/>
</dbReference>
<dbReference type="EMBL" id="BC018407">
    <property type="protein sequence ID" value="AAH18407.1"/>
    <property type="molecule type" value="mRNA"/>
</dbReference>
<dbReference type="CCDS" id="CCDS18753.1"/>
<dbReference type="RefSeq" id="NP_598645.2">
    <property type="nucleotide sequence ID" value="NM_133884.2"/>
</dbReference>
<dbReference type="SMR" id="Q8VEJ1"/>
<dbReference type="FunCoup" id="Q8VEJ1">
    <property type="interactions" value="3006"/>
</dbReference>
<dbReference type="IntAct" id="Q8VEJ1">
    <property type="interactions" value="1"/>
</dbReference>
<dbReference type="STRING" id="10090.ENSMUSP00000030661"/>
<dbReference type="GlyGen" id="Q8VEJ1">
    <property type="glycosylation" value="1 site"/>
</dbReference>
<dbReference type="iPTMnet" id="Q8VEJ1"/>
<dbReference type="PhosphoSitePlus" id="Q8VEJ1"/>
<dbReference type="jPOST" id="Q8VEJ1"/>
<dbReference type="PaxDb" id="10090-ENSMUSP00000030661"/>
<dbReference type="ProteomicsDB" id="267657"/>
<dbReference type="Antibodypedia" id="30698">
    <property type="antibodies" value="32 antibodies from 12 providers"/>
</dbReference>
<dbReference type="Ensembl" id="ENSMUST00000030661.14">
    <property type="protein sequence ID" value="ENSMUSP00000030661.8"/>
    <property type="gene ID" value="ENSMUSG00000028848.14"/>
</dbReference>
<dbReference type="GeneID" id="100210"/>
<dbReference type="KEGG" id="mmu:100210"/>
<dbReference type="UCSC" id="uc008vdb.2">
    <property type="organism name" value="mouse"/>
</dbReference>
<dbReference type="AGR" id="MGI:2140368"/>
<dbReference type="CTD" id="54707"/>
<dbReference type="MGI" id="MGI:2140368">
    <property type="gene designation" value="Gpn2"/>
</dbReference>
<dbReference type="VEuPathDB" id="HostDB:ENSMUSG00000028848"/>
<dbReference type="eggNOG" id="KOG1533">
    <property type="taxonomic scope" value="Eukaryota"/>
</dbReference>
<dbReference type="GeneTree" id="ENSGT00950000183172"/>
<dbReference type="InParanoid" id="Q8VEJ1"/>
<dbReference type="OMA" id="ATHNYFL"/>
<dbReference type="OrthoDB" id="5839at2759"/>
<dbReference type="PhylomeDB" id="Q8VEJ1"/>
<dbReference type="TreeFam" id="TF300828"/>
<dbReference type="BioGRID-ORCS" id="100210">
    <property type="hits" value="27 hits in 77 CRISPR screens"/>
</dbReference>
<dbReference type="ChiTaRS" id="Gpn2">
    <property type="organism name" value="mouse"/>
</dbReference>
<dbReference type="PRO" id="PR:Q8VEJ1"/>
<dbReference type="Proteomes" id="UP000000589">
    <property type="component" value="Chromosome 4"/>
</dbReference>
<dbReference type="RNAct" id="Q8VEJ1">
    <property type="molecule type" value="protein"/>
</dbReference>
<dbReference type="Bgee" id="ENSMUSG00000028848">
    <property type="expression patterns" value="Expressed in animal zygote and 218 other cell types or tissues"/>
</dbReference>
<dbReference type="ExpressionAtlas" id="Q8VEJ1">
    <property type="expression patterns" value="baseline and differential"/>
</dbReference>
<dbReference type="GO" id="GO:0005525">
    <property type="term" value="F:GTP binding"/>
    <property type="evidence" value="ECO:0007669"/>
    <property type="project" value="UniProtKB-KW"/>
</dbReference>
<dbReference type="GO" id="GO:0016787">
    <property type="term" value="F:hydrolase activity"/>
    <property type="evidence" value="ECO:0007669"/>
    <property type="project" value="UniProtKB-KW"/>
</dbReference>
<dbReference type="CDD" id="cd17871">
    <property type="entry name" value="GPN2"/>
    <property type="match status" value="1"/>
</dbReference>
<dbReference type="FunFam" id="3.40.50.300:FF:000338">
    <property type="entry name" value="GPN-loop GTPase 2"/>
    <property type="match status" value="1"/>
</dbReference>
<dbReference type="Gene3D" id="3.40.50.300">
    <property type="entry name" value="P-loop containing nucleotide triphosphate hydrolases"/>
    <property type="match status" value="1"/>
</dbReference>
<dbReference type="InterPro" id="IPR004130">
    <property type="entry name" value="Gpn"/>
</dbReference>
<dbReference type="InterPro" id="IPR030231">
    <property type="entry name" value="Gpn2"/>
</dbReference>
<dbReference type="InterPro" id="IPR027417">
    <property type="entry name" value="P-loop_NTPase"/>
</dbReference>
<dbReference type="PANTHER" id="PTHR21231:SF3">
    <property type="entry name" value="GPN-LOOP GTPASE 2"/>
    <property type="match status" value="1"/>
</dbReference>
<dbReference type="PANTHER" id="PTHR21231">
    <property type="entry name" value="XPA-BINDING PROTEIN 1-RELATED"/>
    <property type="match status" value="1"/>
</dbReference>
<dbReference type="Pfam" id="PF03029">
    <property type="entry name" value="ATP_bind_1"/>
    <property type="match status" value="1"/>
</dbReference>
<dbReference type="SUPFAM" id="SSF52540">
    <property type="entry name" value="P-loop containing nucleoside triphosphate hydrolases"/>
    <property type="match status" value="1"/>
</dbReference>
<feature type="initiator methionine" description="Removed" evidence="2">
    <location>
        <position position="1"/>
    </location>
</feature>
<feature type="chain" id="PRO_0000247831" description="GPN-loop GTPase 2">
    <location>
        <begin position="2"/>
        <end position="310"/>
    </location>
</feature>
<feature type="short sequence motif" description="Gly-Pro-Asn (GPN)-loop; involved in dimer interface" evidence="3">
    <location>
        <begin position="76"/>
        <end position="78"/>
    </location>
</feature>
<feature type="binding site" evidence="3">
    <location>
        <begin position="19"/>
        <end position="24"/>
    </location>
    <ligand>
        <name>GTP</name>
        <dbReference type="ChEBI" id="CHEBI:37565"/>
    </ligand>
</feature>
<feature type="binding site" evidence="3">
    <location>
        <begin position="178"/>
        <end position="181"/>
    </location>
    <ligand>
        <name>GTP</name>
        <dbReference type="ChEBI" id="CHEBI:37565"/>
    </ligand>
</feature>
<feature type="site" description="Stabilizes the phosphate intermediate; shared with dimeric partner" evidence="3">
    <location>
        <position position="78"/>
    </location>
</feature>
<feature type="modified residue" description="N-acetylalanine" evidence="2">
    <location>
        <position position="2"/>
    </location>
</feature>
<feature type="sequence conflict" description="In Ref. 2; AAH18407." evidence="4" ref="2">
    <original>I</original>
    <variation>V</variation>
    <location>
        <position position="174"/>
    </location>
</feature>
<feature type="sequence conflict" description="In Ref. 2; AAH18407." evidence="4" ref="2">
    <original>A</original>
    <variation>T</variation>
    <location>
        <position position="277"/>
    </location>
</feature>
<sequence length="310" mass="34540">MAGAAPTTAFGQAVIGPPGSGKTTYCLGMSEFLRALGRRVAVVNLDPANDGLPYECAVDVGELVGLGDVMDALRLGPNGGLLYCMEYLEANLDWLRAKLEPLRGHYFLFDCPGQVELCTHHTALRSIFSQMAQWDLRLTAVHLVDSHYCTDPAKFISVLCTSLATMLHVELPHINLLSKMDLIEHYGKLAFNLDYYTEVLDLSYLLEHLASDPFFRRYRQLNEKLVQLVEDYSLVSFIPLNIQDKDSIQRVLQAVDKANGYCFGVQEQRSLEAMMSAAMGADFHFSSTLGIQEKYLAPSEQTAEQEAMQL</sequence>
<evidence type="ECO:0000250" key="1">
    <source>
        <dbReference type="UniProtKB" id="Q08726"/>
    </source>
</evidence>
<evidence type="ECO:0000250" key="2">
    <source>
        <dbReference type="UniProtKB" id="Q9H9Y4"/>
    </source>
</evidence>
<evidence type="ECO:0000250" key="3">
    <source>
        <dbReference type="UniProtKB" id="Q9UYR9"/>
    </source>
</evidence>
<evidence type="ECO:0000305" key="4"/>
<name>GPN2_MOUSE</name>
<organism>
    <name type="scientific">Mus musculus</name>
    <name type="common">Mouse</name>
    <dbReference type="NCBI Taxonomy" id="10090"/>
    <lineage>
        <taxon>Eukaryota</taxon>
        <taxon>Metazoa</taxon>
        <taxon>Chordata</taxon>
        <taxon>Craniata</taxon>
        <taxon>Vertebrata</taxon>
        <taxon>Euteleostomi</taxon>
        <taxon>Mammalia</taxon>
        <taxon>Eutheria</taxon>
        <taxon>Euarchontoglires</taxon>
        <taxon>Glires</taxon>
        <taxon>Rodentia</taxon>
        <taxon>Myomorpha</taxon>
        <taxon>Muroidea</taxon>
        <taxon>Muridae</taxon>
        <taxon>Murinae</taxon>
        <taxon>Mus</taxon>
        <taxon>Mus</taxon>
    </lineage>
</organism>